<reference key="1">
    <citation type="journal article" date="1994" name="Microbiology">
        <title>Nucleotide sequence and expression analysis of the Acetobacter xylinum phosphoglucomutase gene.</title>
        <authorList>
            <person name="Brautaset T."/>
            <person name="Standal R."/>
            <person name="Fjaervik E."/>
            <person name="Valla S."/>
        </authorList>
    </citation>
    <scope>NUCLEOTIDE SEQUENCE [GENOMIC DNA]</scope>
    <source>
        <strain>ATCC 23768 / DSM 2004 / NCIMB 7029 / B 4168</strain>
    </source>
</reference>
<feature type="chain" id="PRO_0000147807" description="Phosphoglucomutase">
    <location>
        <begin position="1"/>
        <end position="555"/>
    </location>
</feature>
<feature type="active site" description="Phosphoserine intermediate" evidence="2">
    <location>
        <position position="148"/>
    </location>
</feature>
<feature type="binding site" evidence="2">
    <location>
        <position position="45"/>
    </location>
    <ligand>
        <name>substrate</name>
    </ligand>
</feature>
<feature type="binding site" evidence="2">
    <location>
        <position position="49"/>
    </location>
    <ligand>
        <name>substrate</name>
    </ligand>
</feature>
<feature type="binding site" evidence="2">
    <location>
        <begin position="148"/>
        <end position="149"/>
    </location>
    <ligand>
        <name>substrate</name>
    </ligand>
</feature>
<feature type="binding site" description="via phosphate group" evidence="2">
    <location>
        <position position="148"/>
    </location>
    <ligand>
        <name>Mg(2+)</name>
        <dbReference type="ChEBI" id="CHEBI:18420"/>
    </ligand>
</feature>
<feature type="binding site" evidence="2">
    <location>
        <position position="158"/>
    </location>
    <ligand>
        <name>substrate</name>
    </ligand>
</feature>
<feature type="binding site" evidence="2">
    <location>
        <position position="306"/>
    </location>
    <ligand>
        <name>Mg(2+)</name>
        <dbReference type="ChEBI" id="CHEBI:18420"/>
    </ligand>
</feature>
<feature type="binding site" evidence="2">
    <location>
        <position position="308"/>
    </location>
    <ligand>
        <name>Mg(2+)</name>
        <dbReference type="ChEBI" id="CHEBI:18420"/>
    </ligand>
</feature>
<feature type="binding site" evidence="2">
    <location>
        <begin position="310"/>
        <end position="311"/>
    </location>
    <ligand>
        <name>substrate</name>
    </ligand>
</feature>
<feature type="binding site" evidence="2">
    <location>
        <position position="310"/>
    </location>
    <ligand>
        <name>Mg(2+)</name>
        <dbReference type="ChEBI" id="CHEBI:18420"/>
    </ligand>
</feature>
<feature type="binding site" evidence="2">
    <location>
        <begin position="393"/>
        <end position="395"/>
    </location>
    <ligand>
        <name>substrate</name>
    </ligand>
</feature>
<comment type="function">
    <text>This enzyme participates in both the breakdown and synthesis of glucose.</text>
</comment>
<comment type="catalytic activity">
    <reaction>
        <text>alpha-D-glucose 1-phosphate = alpha-D-glucose 6-phosphate</text>
        <dbReference type="Rhea" id="RHEA:23536"/>
        <dbReference type="ChEBI" id="CHEBI:58225"/>
        <dbReference type="ChEBI" id="CHEBI:58601"/>
        <dbReference type="EC" id="5.4.2.2"/>
    </reaction>
</comment>
<comment type="cofactor">
    <cofactor evidence="1">
        <name>Mg(2+)</name>
        <dbReference type="ChEBI" id="CHEBI:18420"/>
    </cofactor>
    <text evidence="1">Binds 1 Mg(2+) ion per subunit.</text>
</comment>
<comment type="similarity">
    <text evidence="3">Belongs to the phosphohexose mutase family.</text>
</comment>
<proteinExistence type="inferred from homology"/>
<sequence>MPSISPFAGKPVDPDRLVNIDALLDAYYTRKPDPAIATQRVAFGTSGHRGSSLTTSFNENHILSISQAIADYRKGAGITGPLFIGIDTHALSRPALKSALEVFAANGVEVRIDAQDGYTPTPVISHAILTYNRDRSSDLADGVVITPSHNPPEDGGYKYNPPHGGPADTDITKVVETAANDYMAKKMEGVKRVSFEDALKAPTTKRHDYITPYVDDLAAVVDMDVIRESGVSIGIDPLGGAAVDYWQPIIDKYGINATIVSKEVDPTFRFMTADWDGQIRMDCSSPYAMARLVGMKDKFDIAFANDTDADRHGIVSGKYGLMNPNHYLAVAIEYLFNNRENWNASAGVGKTVVSSSMIDRVAKEIGRKLVEVPVGFKWFVDGLYNGTLGFGGEESAGASFLRRAGTVWSTDKDGIILGLLAAEITARTKRTPGAAYEDMTRRLGTPYYARIDAPADPEQKAILKNLSPEQIGMTELAGEPILSTLTNAPGNGAAIGGLKVSAKDGWFAARPSGTENVYKIYAESFKSAAHLKAIQTEAQDAISALFAKAAQKNAG</sequence>
<accession>P38569</accession>
<evidence type="ECO:0000250" key="1"/>
<evidence type="ECO:0000250" key="2">
    <source>
        <dbReference type="UniProtKB" id="P00949"/>
    </source>
</evidence>
<evidence type="ECO:0000305" key="3"/>
<gene>
    <name type="primary">celB</name>
</gene>
<dbReference type="EC" id="5.4.2.2"/>
<dbReference type="EMBL" id="L24077">
    <property type="protein sequence ID" value="AAA21561.1"/>
    <property type="molecule type" value="Genomic_DNA"/>
</dbReference>
<dbReference type="PIR" id="I39487">
    <property type="entry name" value="I39487"/>
</dbReference>
<dbReference type="SMR" id="P38569"/>
<dbReference type="STRING" id="1220579.GCA_001571345_02922"/>
<dbReference type="SABIO-RK" id="P38569"/>
<dbReference type="GO" id="GO:0000287">
    <property type="term" value="F:magnesium ion binding"/>
    <property type="evidence" value="ECO:0007669"/>
    <property type="project" value="InterPro"/>
</dbReference>
<dbReference type="GO" id="GO:0004614">
    <property type="term" value="F:phosphoglucomutase activity"/>
    <property type="evidence" value="ECO:0007669"/>
    <property type="project" value="UniProtKB-EC"/>
</dbReference>
<dbReference type="GO" id="GO:0008973">
    <property type="term" value="F:phosphopentomutase activity"/>
    <property type="evidence" value="ECO:0007669"/>
    <property type="project" value="TreeGrafter"/>
</dbReference>
<dbReference type="GO" id="GO:0006006">
    <property type="term" value="P:glucose metabolic process"/>
    <property type="evidence" value="ECO:0007669"/>
    <property type="project" value="UniProtKB-KW"/>
</dbReference>
<dbReference type="GO" id="GO:0006166">
    <property type="term" value="P:purine ribonucleoside salvage"/>
    <property type="evidence" value="ECO:0007669"/>
    <property type="project" value="TreeGrafter"/>
</dbReference>
<dbReference type="CDD" id="cd05801">
    <property type="entry name" value="PGM_like3"/>
    <property type="match status" value="1"/>
</dbReference>
<dbReference type="Gene3D" id="3.40.120.10">
    <property type="entry name" value="Alpha-D-Glucose-1,6-Bisphosphate, subunit A, domain 3"/>
    <property type="match status" value="3"/>
</dbReference>
<dbReference type="Gene3D" id="3.30.310.50">
    <property type="entry name" value="Alpha-D-phosphohexomutase, C-terminal domain"/>
    <property type="match status" value="1"/>
</dbReference>
<dbReference type="InterPro" id="IPR005844">
    <property type="entry name" value="A-D-PHexomutase_a/b/a-I"/>
</dbReference>
<dbReference type="InterPro" id="IPR016055">
    <property type="entry name" value="A-D-PHexomutase_a/b/a-I/II/III"/>
</dbReference>
<dbReference type="InterPro" id="IPR005845">
    <property type="entry name" value="A-D-PHexomutase_a/b/a-II"/>
</dbReference>
<dbReference type="InterPro" id="IPR005846">
    <property type="entry name" value="A-D-PHexomutase_a/b/a-III"/>
</dbReference>
<dbReference type="InterPro" id="IPR005843">
    <property type="entry name" value="A-D-PHexomutase_C"/>
</dbReference>
<dbReference type="InterPro" id="IPR036900">
    <property type="entry name" value="A-D-PHexomutase_C_sf"/>
</dbReference>
<dbReference type="InterPro" id="IPR016066">
    <property type="entry name" value="A-D-PHexomutase_CS"/>
</dbReference>
<dbReference type="InterPro" id="IPR005852">
    <property type="entry name" value="PGM_a-D-Glc-sp"/>
</dbReference>
<dbReference type="NCBIfam" id="TIGR01132">
    <property type="entry name" value="pgm"/>
    <property type="match status" value="1"/>
</dbReference>
<dbReference type="PANTHER" id="PTHR45745:SF1">
    <property type="entry name" value="PHOSPHOGLUCOMUTASE 2B-RELATED"/>
    <property type="match status" value="1"/>
</dbReference>
<dbReference type="PANTHER" id="PTHR45745">
    <property type="entry name" value="PHOSPHOMANNOMUTASE 45A"/>
    <property type="match status" value="1"/>
</dbReference>
<dbReference type="Pfam" id="PF02878">
    <property type="entry name" value="PGM_PMM_I"/>
    <property type="match status" value="1"/>
</dbReference>
<dbReference type="Pfam" id="PF02879">
    <property type="entry name" value="PGM_PMM_II"/>
    <property type="match status" value="1"/>
</dbReference>
<dbReference type="Pfam" id="PF02880">
    <property type="entry name" value="PGM_PMM_III"/>
    <property type="match status" value="1"/>
</dbReference>
<dbReference type="Pfam" id="PF00408">
    <property type="entry name" value="PGM_PMM_IV"/>
    <property type="match status" value="1"/>
</dbReference>
<dbReference type="SUPFAM" id="SSF55957">
    <property type="entry name" value="Phosphoglucomutase, C-terminal domain"/>
    <property type="match status" value="1"/>
</dbReference>
<dbReference type="SUPFAM" id="SSF53738">
    <property type="entry name" value="Phosphoglucomutase, first 3 domains"/>
    <property type="match status" value="3"/>
</dbReference>
<dbReference type="PROSITE" id="PS00710">
    <property type="entry name" value="PGM_PMM"/>
    <property type="match status" value="1"/>
</dbReference>
<protein>
    <recommendedName>
        <fullName>Phosphoglucomutase</fullName>
        <shortName>PGM</shortName>
        <ecNumber>5.4.2.2</ecNumber>
    </recommendedName>
    <alternativeName>
        <fullName>Glucose phosphomutase</fullName>
    </alternativeName>
</protein>
<name>PGM_KOMXY</name>
<keyword id="KW-0119">Carbohydrate metabolism</keyword>
<keyword id="KW-0313">Glucose metabolism</keyword>
<keyword id="KW-0413">Isomerase</keyword>
<keyword id="KW-0460">Magnesium</keyword>
<keyword id="KW-0479">Metal-binding</keyword>
<keyword id="KW-0597">Phosphoprotein</keyword>
<organism>
    <name type="scientific">Komagataeibacter xylinus</name>
    <name type="common">Gluconacetobacter xylinus</name>
    <dbReference type="NCBI Taxonomy" id="28448"/>
    <lineage>
        <taxon>Bacteria</taxon>
        <taxon>Pseudomonadati</taxon>
        <taxon>Pseudomonadota</taxon>
        <taxon>Alphaproteobacteria</taxon>
        <taxon>Acetobacterales</taxon>
        <taxon>Acetobacteraceae</taxon>
        <taxon>Komagataeibacter</taxon>
    </lineage>
</organism>